<name>BIOW_BACA1</name>
<feature type="chain" id="PRO_0000412077" description="6-carboxyhexanoate--CoA ligase">
    <location>
        <begin position="1"/>
        <end position="258"/>
    </location>
</feature>
<sequence>MREEKFYSVRMRASKNGSHEVGGKHLSGGERLTTYENMIHTVNALLEKGIYHSRGKPDFMKIQFECIDEPIQLVNPLHIETHEVESAEKGQVLARKLLEKAGIQKKMIDLAYEQIPECSGLRGAILFDIHSGKRIDQRKERGVRVSRMDWPDTNFDKWTKCYQMPRNSRIKEALVLATKVSEHPATIAELCWSDDPDYITGYVASKKLGYQRITKLKEYGNESGCRIFFVDGLRDLETYIDYLEKQPVFIQWEEENDA</sequence>
<comment type="function">
    <text evidence="1">Catalyzes the transformation of pimelate into pimeloyl-CoA with concomitant hydrolysis of ATP to AMP.</text>
</comment>
<comment type="catalytic activity">
    <reaction evidence="1">
        <text>heptanedioate + ATP + CoA = 6-carboxyhexanoyl-CoA + AMP + diphosphate</text>
        <dbReference type="Rhea" id="RHEA:14781"/>
        <dbReference type="ChEBI" id="CHEBI:30616"/>
        <dbReference type="ChEBI" id="CHEBI:33019"/>
        <dbReference type="ChEBI" id="CHEBI:36165"/>
        <dbReference type="ChEBI" id="CHEBI:57287"/>
        <dbReference type="ChEBI" id="CHEBI:57360"/>
        <dbReference type="ChEBI" id="CHEBI:456215"/>
        <dbReference type="EC" id="6.2.1.14"/>
    </reaction>
</comment>
<comment type="cofactor">
    <cofactor evidence="1">
        <name>Mg(2+)</name>
        <dbReference type="ChEBI" id="CHEBI:18420"/>
    </cofactor>
</comment>
<comment type="pathway">
    <text evidence="1">Metabolic intermediate metabolism; pimeloyl-CoA biosynthesis; pimeloyl-CoA from pimelate: step 1/1.</text>
</comment>
<comment type="subunit">
    <text evidence="1">Homodimer.</text>
</comment>
<comment type="similarity">
    <text evidence="1">Belongs to the BioW family.</text>
</comment>
<protein>
    <recommendedName>
        <fullName evidence="1">6-carboxyhexanoate--CoA ligase</fullName>
        <ecNumber evidence="1">6.2.1.14</ecNumber>
    </recommendedName>
    <alternativeName>
        <fullName evidence="1">Pimeloyl-CoA synthase</fullName>
    </alternativeName>
</protein>
<proteinExistence type="inferred from homology"/>
<evidence type="ECO:0000255" key="1">
    <source>
        <dbReference type="HAMAP-Rule" id="MF_00668"/>
    </source>
</evidence>
<dbReference type="EC" id="6.2.1.14" evidence="1"/>
<dbReference type="EMBL" id="CP002207">
    <property type="protein sequence ID" value="ADP33509.1"/>
    <property type="molecule type" value="Genomic_DNA"/>
</dbReference>
<dbReference type="RefSeq" id="WP_013390629.1">
    <property type="nucleotide sequence ID" value="NC_014639.1"/>
</dbReference>
<dbReference type="SMR" id="E3E2E2"/>
<dbReference type="KEGG" id="bae:BATR1942_12910"/>
<dbReference type="eggNOG" id="COG1424">
    <property type="taxonomic scope" value="Bacteria"/>
</dbReference>
<dbReference type="HOGENOM" id="CLU_076858_0_0_9"/>
<dbReference type="OrthoDB" id="9792985at2"/>
<dbReference type="UniPathway" id="UPA00999">
    <property type="reaction ID" value="UER00351"/>
</dbReference>
<dbReference type="GO" id="GO:0042410">
    <property type="term" value="F:6-carboxyhexanoate-CoA ligase activity"/>
    <property type="evidence" value="ECO:0007669"/>
    <property type="project" value="UniProtKB-UniRule"/>
</dbReference>
<dbReference type="GO" id="GO:0005524">
    <property type="term" value="F:ATP binding"/>
    <property type="evidence" value="ECO:0007669"/>
    <property type="project" value="UniProtKB-KW"/>
</dbReference>
<dbReference type="GO" id="GO:0000287">
    <property type="term" value="F:magnesium ion binding"/>
    <property type="evidence" value="ECO:0007669"/>
    <property type="project" value="UniProtKB-UniRule"/>
</dbReference>
<dbReference type="GO" id="GO:0009102">
    <property type="term" value="P:biotin biosynthetic process"/>
    <property type="evidence" value="ECO:0007669"/>
    <property type="project" value="UniProtKB-UniRule"/>
</dbReference>
<dbReference type="HAMAP" id="MF_00668">
    <property type="entry name" value="BioW"/>
    <property type="match status" value="1"/>
</dbReference>
<dbReference type="InterPro" id="IPR005499">
    <property type="entry name" value="BioW"/>
</dbReference>
<dbReference type="NCBIfam" id="TIGR01204">
    <property type="entry name" value="bioW"/>
    <property type="match status" value="1"/>
</dbReference>
<dbReference type="NCBIfam" id="NF002360">
    <property type="entry name" value="PRK01322.1"/>
    <property type="match status" value="1"/>
</dbReference>
<dbReference type="Pfam" id="PF03744">
    <property type="entry name" value="BioW"/>
    <property type="match status" value="1"/>
</dbReference>
<gene>
    <name evidence="1" type="primary">bioW</name>
    <name type="ordered locus">BATR1942_12910</name>
</gene>
<keyword id="KW-0067">ATP-binding</keyword>
<keyword id="KW-0093">Biotin biosynthesis</keyword>
<keyword id="KW-0436">Ligase</keyword>
<keyword id="KW-0460">Magnesium</keyword>
<keyword id="KW-0547">Nucleotide-binding</keyword>
<accession>E3E2E2</accession>
<organism>
    <name type="scientific">Bacillus atrophaeus (strain 1942)</name>
    <dbReference type="NCBI Taxonomy" id="720555"/>
    <lineage>
        <taxon>Bacteria</taxon>
        <taxon>Bacillati</taxon>
        <taxon>Bacillota</taxon>
        <taxon>Bacilli</taxon>
        <taxon>Bacillales</taxon>
        <taxon>Bacillaceae</taxon>
        <taxon>Bacillus</taxon>
    </lineage>
</organism>
<reference key="1">
    <citation type="submission" date="2010-09" db="EMBL/GenBank/DDBJ databases">
        <title>Genomic signatures of strain selection and enhancement in Bacillus atrophaeus subsp. Globigii, a historical biowarfare simulant.</title>
        <authorList>
            <person name="Gibbons H.S."/>
            <person name="Broomall S."/>
            <person name="McNew L.A."/>
            <person name="Daligault H."/>
            <person name="Chapman C."/>
            <person name="Bruce D."/>
            <person name="Karavis M."/>
            <person name="McGregor P."/>
            <person name="Hong C."/>
            <person name="Park K.H."/>
            <person name="Akmal A."/>
            <person name="Feldman A."/>
            <person name="Lin J.S."/>
            <person name="Chang W.E."/>
            <person name="Higgs B.W."/>
            <person name="Demirev P."/>
            <person name="Lindquist J."/>
            <person name="Liem A."/>
            <person name="Fochler E."/>
            <person name="Tapia R."/>
            <person name="Bishop-Lilly K."/>
            <person name="Detter C."/>
            <person name="Han C."/>
            <person name="Sozhamannan S."/>
            <person name="Rosenzweig C.N."/>
            <person name="Skowronski E."/>
        </authorList>
    </citation>
    <scope>NUCLEOTIDE SEQUENCE [LARGE SCALE GENOMIC DNA]</scope>
    <source>
        <strain>1942</strain>
    </source>
</reference>